<protein>
    <recommendedName>
        <fullName>Luminal-binding protein 2</fullName>
        <shortName>BiP 2</shortName>
    </recommendedName>
</protein>
<gene>
    <name type="primary">bip2</name>
    <name type="ORF">DDB_G0276445</name>
</gene>
<comment type="function">
    <text evidence="1">Probably plays a role in facilitating the assembly of multimeric protein complexes inside the ER.</text>
</comment>
<comment type="subcellular location">
    <subcellularLocation>
        <location evidence="3">Endoplasmic reticulum lumen</location>
    </subcellularLocation>
</comment>
<comment type="similarity">
    <text evidence="4">Belongs to the heat shock protein 70 family.</text>
</comment>
<proteinExistence type="evidence at protein level"/>
<feature type="signal peptide" evidence="2">
    <location>
        <begin position="1"/>
        <end position="20"/>
    </location>
</feature>
<feature type="chain" id="PRO_0000327978" description="Luminal-binding protein 2">
    <location>
        <begin position="21"/>
        <end position="658"/>
    </location>
</feature>
<feature type="short sequence motif" description="Prevents secretion from ER" evidence="3">
    <location>
        <begin position="655"/>
        <end position="658"/>
    </location>
</feature>
<feature type="glycosylation site" description="N-linked (GlcNAc...) asparagine" evidence="2">
    <location>
        <position position="611"/>
    </location>
</feature>
<reference key="1">
    <citation type="journal article" date="2002" name="Nature">
        <title>Sequence and analysis of chromosome 2 of Dictyostelium discoideum.</title>
        <authorList>
            <person name="Gloeckner G."/>
            <person name="Eichinger L."/>
            <person name="Szafranski K."/>
            <person name="Pachebat J.A."/>
            <person name="Bankier A.T."/>
            <person name="Dear P.H."/>
            <person name="Lehmann R."/>
            <person name="Baumgart C."/>
            <person name="Parra G."/>
            <person name="Abril J.F."/>
            <person name="Guigo R."/>
            <person name="Kumpf K."/>
            <person name="Tunggal B."/>
            <person name="Cox E.C."/>
            <person name="Quail M.A."/>
            <person name="Platzer M."/>
            <person name="Rosenthal A."/>
            <person name="Noegel A.A."/>
        </authorList>
    </citation>
    <scope>NUCLEOTIDE SEQUENCE [LARGE SCALE GENOMIC DNA]</scope>
    <source>
        <strain>AX4</strain>
    </source>
</reference>
<reference key="2">
    <citation type="journal article" date="2005" name="Nature">
        <title>The genome of the social amoeba Dictyostelium discoideum.</title>
        <authorList>
            <person name="Eichinger L."/>
            <person name="Pachebat J.A."/>
            <person name="Gloeckner G."/>
            <person name="Rajandream M.A."/>
            <person name="Sucgang R."/>
            <person name="Berriman M."/>
            <person name="Song J."/>
            <person name="Olsen R."/>
            <person name="Szafranski K."/>
            <person name="Xu Q."/>
            <person name="Tunggal B."/>
            <person name="Kummerfeld S."/>
            <person name="Madera M."/>
            <person name="Konfortov B.A."/>
            <person name="Rivero F."/>
            <person name="Bankier A.T."/>
            <person name="Lehmann R."/>
            <person name="Hamlin N."/>
            <person name="Davies R."/>
            <person name="Gaudet P."/>
            <person name="Fey P."/>
            <person name="Pilcher K."/>
            <person name="Chen G."/>
            <person name="Saunders D."/>
            <person name="Sodergren E.J."/>
            <person name="Davis P."/>
            <person name="Kerhornou A."/>
            <person name="Nie X."/>
            <person name="Hall N."/>
            <person name="Anjard C."/>
            <person name="Hemphill L."/>
            <person name="Bason N."/>
            <person name="Farbrother P."/>
            <person name="Desany B."/>
            <person name="Just E."/>
            <person name="Morio T."/>
            <person name="Rost R."/>
            <person name="Churcher C.M."/>
            <person name="Cooper J."/>
            <person name="Haydock S."/>
            <person name="van Driessche N."/>
            <person name="Cronin A."/>
            <person name="Goodhead I."/>
            <person name="Muzny D.M."/>
            <person name="Mourier T."/>
            <person name="Pain A."/>
            <person name="Lu M."/>
            <person name="Harper D."/>
            <person name="Lindsay R."/>
            <person name="Hauser H."/>
            <person name="James K.D."/>
            <person name="Quiles M."/>
            <person name="Madan Babu M."/>
            <person name="Saito T."/>
            <person name="Buchrieser C."/>
            <person name="Wardroper A."/>
            <person name="Felder M."/>
            <person name="Thangavelu M."/>
            <person name="Johnson D."/>
            <person name="Knights A."/>
            <person name="Loulseged H."/>
            <person name="Mungall K.L."/>
            <person name="Oliver K."/>
            <person name="Price C."/>
            <person name="Quail M.A."/>
            <person name="Urushihara H."/>
            <person name="Hernandez J."/>
            <person name="Rabbinowitsch E."/>
            <person name="Steffen D."/>
            <person name="Sanders M."/>
            <person name="Ma J."/>
            <person name="Kohara Y."/>
            <person name="Sharp S."/>
            <person name="Simmonds M.N."/>
            <person name="Spiegler S."/>
            <person name="Tivey A."/>
            <person name="Sugano S."/>
            <person name="White B."/>
            <person name="Walker D."/>
            <person name="Woodward J.R."/>
            <person name="Winckler T."/>
            <person name="Tanaka Y."/>
            <person name="Shaulsky G."/>
            <person name="Schleicher M."/>
            <person name="Weinstock G.M."/>
            <person name="Rosenthal A."/>
            <person name="Cox E.C."/>
            <person name="Chisholm R.L."/>
            <person name="Gibbs R.A."/>
            <person name="Loomis W.F."/>
            <person name="Platzer M."/>
            <person name="Kay R.R."/>
            <person name="Williams J.G."/>
            <person name="Dear P.H."/>
            <person name="Noegel A.A."/>
            <person name="Barrell B.G."/>
            <person name="Kuspa A."/>
        </authorList>
    </citation>
    <scope>NUCLEOTIDE SEQUENCE [LARGE SCALE GENOMIC DNA]</scope>
    <source>
        <strain>AX4</strain>
    </source>
</reference>
<reference key="3">
    <citation type="journal article" date="2006" name="Mol. Cell. Proteomics">
        <title>Proteomics fingerprinting of phagosome maturation and evidence for the role of a Galpha during uptake.</title>
        <authorList>
            <person name="Gotthardt D."/>
            <person name="Blancheteau V."/>
            <person name="Bosserhoff A."/>
            <person name="Ruppert T."/>
            <person name="Delorenzi M."/>
            <person name="Soldati T."/>
        </authorList>
    </citation>
    <scope>IDENTIFICATION BY MASS SPECTROMETRY [LARGE SCALE ANALYSIS]</scope>
    <source>
        <strain>AX2</strain>
    </source>
</reference>
<dbReference type="EMBL" id="AAFI02000015">
    <property type="protein sequence ID" value="EAL69176.1"/>
    <property type="molecule type" value="Genomic_DNA"/>
</dbReference>
<dbReference type="RefSeq" id="XP_643155.1">
    <property type="nucleotide sequence ID" value="XM_638063.1"/>
</dbReference>
<dbReference type="SMR" id="Q8T869"/>
<dbReference type="FunCoup" id="Q8T869">
    <property type="interactions" value="706"/>
</dbReference>
<dbReference type="STRING" id="44689.Q8T869"/>
<dbReference type="GlyCosmos" id="Q8T869">
    <property type="glycosylation" value="1 site, No reported glycans"/>
</dbReference>
<dbReference type="GlyGen" id="Q8T869">
    <property type="glycosylation" value="1 site"/>
</dbReference>
<dbReference type="PaxDb" id="44689-DDB0233663"/>
<dbReference type="EnsemblProtists" id="EAL69176">
    <property type="protein sequence ID" value="EAL69176"/>
    <property type="gene ID" value="DDB_G0276445"/>
</dbReference>
<dbReference type="GeneID" id="8620562"/>
<dbReference type="KEGG" id="ddi:DDB_G0276445"/>
<dbReference type="dictyBase" id="DDB_G0276445"/>
<dbReference type="VEuPathDB" id="AmoebaDB:DDB_G0276445"/>
<dbReference type="eggNOG" id="KOG0100">
    <property type="taxonomic scope" value="Eukaryota"/>
</dbReference>
<dbReference type="HOGENOM" id="CLU_005965_3_0_1"/>
<dbReference type="InParanoid" id="Q8T869"/>
<dbReference type="OMA" id="VQRDIKH"/>
<dbReference type="PhylomeDB" id="Q8T869"/>
<dbReference type="Reactome" id="R-DDI-3371453">
    <property type="pathway name" value="Regulation of HSF1-mediated heat shock response"/>
</dbReference>
<dbReference type="Reactome" id="R-DDI-9909505">
    <property type="pathway name" value="Modulation of host responses by IFN-stimulated genes"/>
</dbReference>
<dbReference type="PRO" id="PR:Q8T869"/>
<dbReference type="Proteomes" id="UP000002195">
    <property type="component" value="Chromosome 2"/>
</dbReference>
<dbReference type="GO" id="GO:0005737">
    <property type="term" value="C:cytoplasm"/>
    <property type="evidence" value="ECO:0000318"/>
    <property type="project" value="GO_Central"/>
</dbReference>
<dbReference type="GO" id="GO:0034663">
    <property type="term" value="C:endoplasmic reticulum chaperone complex"/>
    <property type="evidence" value="ECO:0000318"/>
    <property type="project" value="GO_Central"/>
</dbReference>
<dbReference type="GO" id="GO:0005788">
    <property type="term" value="C:endoplasmic reticulum lumen"/>
    <property type="evidence" value="ECO:0000318"/>
    <property type="project" value="GO_Central"/>
</dbReference>
<dbReference type="GO" id="GO:0005811">
    <property type="term" value="C:lipid droplet"/>
    <property type="evidence" value="ECO:0007005"/>
    <property type="project" value="dictyBase"/>
</dbReference>
<dbReference type="GO" id="GO:0016020">
    <property type="term" value="C:membrane"/>
    <property type="evidence" value="ECO:0000318"/>
    <property type="project" value="GO_Central"/>
</dbReference>
<dbReference type="GO" id="GO:0005634">
    <property type="term" value="C:nucleus"/>
    <property type="evidence" value="ECO:0000318"/>
    <property type="project" value="GO_Central"/>
</dbReference>
<dbReference type="GO" id="GO:0045335">
    <property type="term" value="C:phagocytic vesicle"/>
    <property type="evidence" value="ECO:0007005"/>
    <property type="project" value="dictyBase"/>
</dbReference>
<dbReference type="GO" id="GO:0005524">
    <property type="term" value="F:ATP binding"/>
    <property type="evidence" value="ECO:0007669"/>
    <property type="project" value="UniProtKB-KW"/>
</dbReference>
<dbReference type="GO" id="GO:0016887">
    <property type="term" value="F:ATP hydrolysis activity"/>
    <property type="evidence" value="ECO:0000318"/>
    <property type="project" value="GO_Central"/>
</dbReference>
<dbReference type="GO" id="GO:0140662">
    <property type="term" value="F:ATP-dependent protein folding chaperone"/>
    <property type="evidence" value="ECO:0007669"/>
    <property type="project" value="InterPro"/>
</dbReference>
<dbReference type="GO" id="GO:0031072">
    <property type="term" value="F:heat shock protein binding"/>
    <property type="evidence" value="ECO:0000318"/>
    <property type="project" value="GO_Central"/>
</dbReference>
<dbReference type="GO" id="GO:0044183">
    <property type="term" value="F:protein folding chaperone"/>
    <property type="evidence" value="ECO:0000318"/>
    <property type="project" value="GO_Central"/>
</dbReference>
<dbReference type="GO" id="GO:0051085">
    <property type="term" value="P:chaperone cofactor-dependent protein refolding"/>
    <property type="evidence" value="ECO:0000318"/>
    <property type="project" value="GO_Central"/>
</dbReference>
<dbReference type="GO" id="GO:0030968">
    <property type="term" value="P:endoplasmic reticulum unfolded protein response"/>
    <property type="evidence" value="ECO:0000318"/>
    <property type="project" value="GO_Central"/>
</dbReference>
<dbReference type="GO" id="GO:0036503">
    <property type="term" value="P:ERAD pathway"/>
    <property type="evidence" value="ECO:0000318"/>
    <property type="project" value="GO_Central"/>
</dbReference>
<dbReference type="GO" id="GO:0042026">
    <property type="term" value="P:protein refolding"/>
    <property type="evidence" value="ECO:0000318"/>
    <property type="project" value="GO_Central"/>
</dbReference>
<dbReference type="GO" id="GO:0046689">
    <property type="term" value="P:response to mercury ion"/>
    <property type="evidence" value="ECO:0000314"/>
    <property type="project" value="dictyBase"/>
</dbReference>
<dbReference type="CDD" id="cd10241">
    <property type="entry name" value="ASKHA_NBD_HSP70_BiP"/>
    <property type="match status" value="1"/>
</dbReference>
<dbReference type="FunFam" id="1.20.1270.10:FF:000009">
    <property type="entry name" value="DnaK-type molecular chaperone BiP"/>
    <property type="match status" value="1"/>
</dbReference>
<dbReference type="FunFam" id="3.90.640.10:FF:000153">
    <property type="entry name" value="Endoplasmic reticulum chaperone BiP"/>
    <property type="match status" value="1"/>
</dbReference>
<dbReference type="FunFam" id="2.60.34.10:FF:000002">
    <property type="entry name" value="Heat shock 70 kDa"/>
    <property type="match status" value="1"/>
</dbReference>
<dbReference type="FunFam" id="3.30.420.40:FF:000172">
    <property type="entry name" value="Heat shock 70 kDa protein"/>
    <property type="match status" value="2"/>
</dbReference>
<dbReference type="FunFam" id="3.30.420.40:FF:000026">
    <property type="entry name" value="Heat shock protein 70"/>
    <property type="match status" value="1"/>
</dbReference>
<dbReference type="FunFam" id="3.30.30.30:FF:000005">
    <property type="entry name" value="Heat shock protein ssb1"/>
    <property type="match status" value="1"/>
</dbReference>
<dbReference type="Gene3D" id="1.20.1270.10">
    <property type="match status" value="1"/>
</dbReference>
<dbReference type="Gene3D" id="3.30.420.40">
    <property type="match status" value="2"/>
</dbReference>
<dbReference type="Gene3D" id="3.90.640.10">
    <property type="entry name" value="Actin, Chain A, domain 4"/>
    <property type="match status" value="1"/>
</dbReference>
<dbReference type="Gene3D" id="2.60.34.10">
    <property type="entry name" value="Substrate Binding Domain Of DNAk, Chain A, domain 1"/>
    <property type="match status" value="1"/>
</dbReference>
<dbReference type="InterPro" id="IPR043129">
    <property type="entry name" value="ATPase_NBD"/>
</dbReference>
<dbReference type="InterPro" id="IPR042050">
    <property type="entry name" value="BIP_NBD"/>
</dbReference>
<dbReference type="InterPro" id="IPR018181">
    <property type="entry name" value="Heat_shock_70_CS"/>
</dbReference>
<dbReference type="InterPro" id="IPR029048">
    <property type="entry name" value="HSP70_C_sf"/>
</dbReference>
<dbReference type="InterPro" id="IPR029047">
    <property type="entry name" value="HSP70_peptide-bd_sf"/>
</dbReference>
<dbReference type="InterPro" id="IPR013126">
    <property type="entry name" value="Hsp_70_fam"/>
</dbReference>
<dbReference type="NCBIfam" id="NF001413">
    <property type="entry name" value="PRK00290.1"/>
    <property type="match status" value="1"/>
</dbReference>
<dbReference type="PANTHER" id="PTHR19375">
    <property type="entry name" value="HEAT SHOCK PROTEIN 70KDA"/>
    <property type="match status" value="1"/>
</dbReference>
<dbReference type="Pfam" id="PF00012">
    <property type="entry name" value="HSP70"/>
    <property type="match status" value="1"/>
</dbReference>
<dbReference type="PRINTS" id="PR00301">
    <property type="entry name" value="HEATSHOCK70"/>
</dbReference>
<dbReference type="SUPFAM" id="SSF53067">
    <property type="entry name" value="Actin-like ATPase domain"/>
    <property type="match status" value="2"/>
</dbReference>
<dbReference type="SUPFAM" id="SSF100934">
    <property type="entry name" value="Heat shock protein 70kD (HSP70), C-terminal subdomain"/>
    <property type="match status" value="1"/>
</dbReference>
<dbReference type="SUPFAM" id="SSF100920">
    <property type="entry name" value="Heat shock protein 70kD (HSP70), peptide-binding domain"/>
    <property type="match status" value="1"/>
</dbReference>
<dbReference type="PROSITE" id="PS00014">
    <property type="entry name" value="ER_TARGET"/>
    <property type="match status" value="1"/>
</dbReference>
<dbReference type="PROSITE" id="PS00297">
    <property type="entry name" value="HSP70_1"/>
    <property type="match status" value="1"/>
</dbReference>
<dbReference type="PROSITE" id="PS00329">
    <property type="entry name" value="HSP70_2"/>
    <property type="match status" value="1"/>
</dbReference>
<dbReference type="PROSITE" id="PS01036">
    <property type="entry name" value="HSP70_3"/>
    <property type="match status" value="1"/>
</dbReference>
<sequence>MNKSIYALLCLLLLISFAAAAEKKEEEKKDYGSVIGIDLGTTYSCVGVFKKGKVEIIPNDQGNRITPSYVAFTETERLIGEAAKNQATLNPENTIFDIKRLIGRRFDDEEVQRDMKLLPYKIVSKNNKPYVVVKVKGEEKTYSPEEISAMILGRMKEIAEASLGKTVTHAVVTCPAYFNDAQRAATKDAGVIAGLEVLRVINEPTAAALAYGFDATGDKEKNILVYDLGGGTFDVSVLSIEDGVFEVRSTNGDTHLGGEDFDQRVMKHFLTVFQKKTGKDASKDKKSLQKLRRAAENAKRILSTSPQTQLEIENFFDGKDLIETLTRAKFEELNMDLFKKTLDPVKKVLEDAKFKKSQIHEVVLVGGSTRIPKIQQLLKDFFNGKEPNRGVHPDEAVAYGAAVQGGIFTNEEGTDTLVLLDIAPLTLGIETVGGVMTALIPRGTFVPTKKSQVFSTYQDNQDRVSIQIYEGERSMTKDNNLLGKFDLSGIPPAQRGVPQIEVTFEMDVNGILHVSAEDKASGSKESITITNDKERLSQADIDRMVKEAADAADEDKAAKERVEAKNTLENYIYQIKNTIGDKDKIGGKIESDDKETIETAISDALSWLDVNSSAEKEEFDEQYKILEKIVQPIFSKLYGAAGGSPNGAGEDMPNHDEL</sequence>
<organism>
    <name type="scientific">Dictyostelium discoideum</name>
    <name type="common">Social amoeba</name>
    <dbReference type="NCBI Taxonomy" id="44689"/>
    <lineage>
        <taxon>Eukaryota</taxon>
        <taxon>Amoebozoa</taxon>
        <taxon>Evosea</taxon>
        <taxon>Eumycetozoa</taxon>
        <taxon>Dictyostelia</taxon>
        <taxon>Dictyosteliales</taxon>
        <taxon>Dictyosteliaceae</taxon>
        <taxon>Dictyostelium</taxon>
    </lineage>
</organism>
<evidence type="ECO:0000250" key="1"/>
<evidence type="ECO:0000255" key="2"/>
<evidence type="ECO:0000255" key="3">
    <source>
        <dbReference type="PROSITE-ProRule" id="PRU10138"/>
    </source>
</evidence>
<evidence type="ECO:0000305" key="4"/>
<accession>Q8T869</accession>
<accession>Q551H9</accession>
<keyword id="KW-0067">ATP-binding</keyword>
<keyword id="KW-0143">Chaperone</keyword>
<keyword id="KW-0256">Endoplasmic reticulum</keyword>
<keyword id="KW-0325">Glycoprotein</keyword>
<keyword id="KW-0547">Nucleotide-binding</keyword>
<keyword id="KW-1185">Reference proteome</keyword>
<keyword id="KW-0732">Signal</keyword>
<name>BIP2_DICDI</name>